<accession>P82188</accession>
<protein>
    <recommendedName>
        <fullName>Fatty acid-binding protein, liver</fullName>
    </recommendedName>
    <alternativeName>
        <fullName>Liver-type fatty acid-binding protein</fullName>
        <shortName>L-FABP</shortName>
    </alternativeName>
</protein>
<comment type="function">
    <text>FABPs are thought to play a role in the intracellular transport of long-chain fatty acids and their acyl-CoA esters.</text>
</comment>
<comment type="subcellular location">
    <subcellularLocation>
        <location>Cytoplasm</location>
    </subcellularLocation>
</comment>
<comment type="domain">
    <text evidence="1">Forms a beta-barrel structure that accommodates hydrophobic ligands in its interior.</text>
</comment>
<comment type="PTM">
    <text>The N-terminus is blocked.</text>
</comment>
<comment type="similarity">
    <text evidence="2">Belongs to the calycin superfamily. Fatty-acid binding protein (FABP) family.</text>
</comment>
<keyword id="KW-0963">Cytoplasm</keyword>
<keyword id="KW-0903">Direct protein sequencing</keyword>
<keyword id="KW-0446">Lipid-binding</keyword>
<keyword id="KW-0813">Transport</keyword>
<feature type="chain" id="PRO_0000067348" description="Fatty acid-binding protein, liver">
    <location>
        <begin position="1" status="less than"/>
        <end position="114" status="greater than"/>
    </location>
</feature>
<feature type="unsure residue">
    <location>
        <position position="106"/>
    </location>
</feature>
<feature type="unsure residue">
    <location>
        <position position="113"/>
    </location>
</feature>
<feature type="non-terminal residue">
    <location>
        <position position="1"/>
    </location>
</feature>
<feature type="non-terminal residue">
    <location>
        <position position="114"/>
    </location>
</feature>
<reference key="1">
    <citation type="journal article" date="1999" name="Comp. Biochem. Physiol.">
        <title>The amino acid sequence of a lamprey (Entosphenus japonicus) liver fatty acid-binding protein identified its close relationship to cardiac fatty acid-binding proteins of Mammalia.</title>
        <authorList>
            <person name="Baba K."/>
            <person name="Takahashi Y."/>
            <person name="Aoyagi Y."/>
            <person name="Odani S."/>
        </authorList>
    </citation>
    <scope>PROTEIN SEQUENCE</scope>
    <source>
        <tissue>Liver</tissue>
    </source>
</reference>
<proteinExistence type="evidence at protein level"/>
<sequence length="114" mass="12496">DSANFDEYMKAIGIGFAMRQIGSVTKPTLIISAEGDHVTLKTTSTFKNMEWNFTLGEEFDETTADERKTKSTFTVDGDKLVQVQRWEGKETTISRAVSGDSMVATCSIGDVVCA</sequence>
<organism>
    <name type="scientific">Lethenteron camtschaticum</name>
    <name type="common">Japanese lamprey</name>
    <name type="synonym">Lampetra japonica</name>
    <dbReference type="NCBI Taxonomy" id="980415"/>
    <lineage>
        <taxon>Eukaryota</taxon>
        <taxon>Metazoa</taxon>
        <taxon>Chordata</taxon>
        <taxon>Craniata</taxon>
        <taxon>Vertebrata</taxon>
        <taxon>Cyclostomata</taxon>
        <taxon>Hyperoartia</taxon>
        <taxon>Petromyzontiformes</taxon>
        <taxon>Petromyzontidae</taxon>
        <taxon>Lethenteron</taxon>
    </lineage>
</organism>
<dbReference type="SMR" id="P82188"/>
<dbReference type="GO" id="GO:0005737">
    <property type="term" value="C:cytoplasm"/>
    <property type="evidence" value="ECO:0007669"/>
    <property type="project" value="UniProtKB-SubCell"/>
</dbReference>
<dbReference type="GO" id="GO:0008289">
    <property type="term" value="F:lipid binding"/>
    <property type="evidence" value="ECO:0007669"/>
    <property type="project" value="UniProtKB-KW"/>
</dbReference>
<dbReference type="FunFam" id="2.40.128.20:FF:000001">
    <property type="entry name" value="Fatty acid-binding protein, adipocyte"/>
    <property type="match status" value="1"/>
</dbReference>
<dbReference type="Gene3D" id="2.40.128.20">
    <property type="match status" value="1"/>
</dbReference>
<dbReference type="InterPro" id="IPR012674">
    <property type="entry name" value="Calycin"/>
</dbReference>
<dbReference type="InterPro" id="IPR000463">
    <property type="entry name" value="Fatty_acid-bd"/>
</dbReference>
<dbReference type="InterPro" id="IPR031259">
    <property type="entry name" value="ILBP"/>
</dbReference>
<dbReference type="InterPro" id="IPR000566">
    <property type="entry name" value="Lipocln_cytosolic_FA-bd_dom"/>
</dbReference>
<dbReference type="PANTHER" id="PTHR11955">
    <property type="entry name" value="FATTY ACID BINDING PROTEIN"/>
    <property type="match status" value="1"/>
</dbReference>
<dbReference type="Pfam" id="PF00061">
    <property type="entry name" value="Lipocalin"/>
    <property type="match status" value="1"/>
</dbReference>
<dbReference type="PRINTS" id="PR00178">
    <property type="entry name" value="FATTYACIDBP"/>
</dbReference>
<dbReference type="SUPFAM" id="SSF50814">
    <property type="entry name" value="Lipocalins"/>
    <property type="match status" value="1"/>
</dbReference>
<evidence type="ECO:0000250" key="1"/>
<evidence type="ECO:0000305" key="2"/>
<name>FABPL_LETCA</name>